<organism>
    <name type="scientific">Deinococcus radiodurans (strain ATCC 13939 / DSM 20539 / JCM 16871 / CCUG 27074 / LMG 4051 / NBRC 15346 / NCIMB 9279 / VKM B-1422 / R1)</name>
    <dbReference type="NCBI Taxonomy" id="243230"/>
    <lineage>
        <taxon>Bacteria</taxon>
        <taxon>Thermotogati</taxon>
        <taxon>Deinococcota</taxon>
        <taxon>Deinococci</taxon>
        <taxon>Deinococcales</taxon>
        <taxon>Deinococcaceae</taxon>
        <taxon>Deinococcus</taxon>
    </lineage>
</organism>
<keyword id="KW-1003">Cell membrane</keyword>
<keyword id="KW-0143">Chaperone</keyword>
<keyword id="KW-0472">Membrane</keyword>
<keyword id="KW-0653">Protein transport</keyword>
<keyword id="KW-1185">Reference proteome</keyword>
<keyword id="KW-0812">Transmembrane</keyword>
<keyword id="KW-1133">Transmembrane helix</keyword>
<keyword id="KW-0813">Transport</keyword>
<dbReference type="EMBL" id="AE000513">
    <property type="protein sequence ID" value="AAF11697.1"/>
    <property type="molecule type" value="Genomic_DNA"/>
</dbReference>
<dbReference type="PIR" id="H75307">
    <property type="entry name" value="H75307"/>
</dbReference>
<dbReference type="RefSeq" id="NP_295872.1">
    <property type="nucleotide sequence ID" value="NC_001263.1"/>
</dbReference>
<dbReference type="SMR" id="Q9RSH5"/>
<dbReference type="FunCoup" id="Q9RSH5">
    <property type="interactions" value="337"/>
</dbReference>
<dbReference type="STRING" id="243230.DR_2149"/>
<dbReference type="PaxDb" id="243230-DR_2149"/>
<dbReference type="EnsemblBacteria" id="AAF11697">
    <property type="protein sequence ID" value="AAF11697"/>
    <property type="gene ID" value="DR_2149"/>
</dbReference>
<dbReference type="KEGG" id="dra:DR_2149"/>
<dbReference type="PATRIC" id="fig|243230.17.peg.2374"/>
<dbReference type="eggNOG" id="COG0706">
    <property type="taxonomic scope" value="Bacteria"/>
</dbReference>
<dbReference type="HOGENOM" id="CLU_552889_0_0_0"/>
<dbReference type="InParanoid" id="Q9RSH5"/>
<dbReference type="OrthoDB" id="9780552at2"/>
<dbReference type="Proteomes" id="UP000002524">
    <property type="component" value="Chromosome 1"/>
</dbReference>
<dbReference type="GO" id="GO:0005886">
    <property type="term" value="C:plasma membrane"/>
    <property type="evidence" value="ECO:0000318"/>
    <property type="project" value="GO_Central"/>
</dbReference>
<dbReference type="GO" id="GO:0032977">
    <property type="term" value="F:membrane insertase activity"/>
    <property type="evidence" value="ECO:0000318"/>
    <property type="project" value="GO_Central"/>
</dbReference>
<dbReference type="GO" id="GO:0051205">
    <property type="term" value="P:protein insertion into membrane"/>
    <property type="evidence" value="ECO:0000318"/>
    <property type="project" value="GO_Central"/>
</dbReference>
<dbReference type="GO" id="GO:0015031">
    <property type="term" value="P:protein transport"/>
    <property type="evidence" value="ECO:0007669"/>
    <property type="project" value="UniProtKB-KW"/>
</dbReference>
<dbReference type="CDD" id="cd20070">
    <property type="entry name" value="5TM_YidC_Alb3"/>
    <property type="match status" value="1"/>
</dbReference>
<dbReference type="Gene3D" id="2.70.98.90">
    <property type="match status" value="1"/>
</dbReference>
<dbReference type="InterPro" id="IPR001708">
    <property type="entry name" value="YidC/ALB3/OXA1/COX18"/>
</dbReference>
<dbReference type="InterPro" id="IPR028055">
    <property type="entry name" value="YidC/Oxa/ALB_C"/>
</dbReference>
<dbReference type="InterPro" id="IPR047196">
    <property type="entry name" value="YidC_ALB_C"/>
</dbReference>
<dbReference type="InterPro" id="IPR038221">
    <property type="entry name" value="YidC_periplasmic_sf"/>
</dbReference>
<dbReference type="NCBIfam" id="TIGR03592">
    <property type="entry name" value="yidC_oxa1_cterm"/>
    <property type="match status" value="1"/>
</dbReference>
<dbReference type="PANTHER" id="PTHR12428:SF65">
    <property type="entry name" value="CYTOCHROME C OXIDASE ASSEMBLY PROTEIN COX18, MITOCHONDRIAL"/>
    <property type="match status" value="1"/>
</dbReference>
<dbReference type="PANTHER" id="PTHR12428">
    <property type="entry name" value="OXA1"/>
    <property type="match status" value="1"/>
</dbReference>
<dbReference type="Pfam" id="PF02096">
    <property type="entry name" value="60KD_IMP"/>
    <property type="match status" value="1"/>
</dbReference>
<dbReference type="PRINTS" id="PR00701">
    <property type="entry name" value="60KDINNERMP"/>
</dbReference>
<name>YIDC_DEIRA</name>
<feature type="chain" id="PRO_0000124711" description="Membrane protein insertase YidC">
    <location>
        <begin position="1"/>
        <end position="428"/>
    </location>
</feature>
<feature type="transmembrane region" description="Helical" evidence="2">
    <location>
        <begin position="209"/>
        <end position="229"/>
    </location>
</feature>
<feature type="transmembrane region" description="Helical" evidence="2">
    <location>
        <begin position="283"/>
        <end position="303"/>
    </location>
</feature>
<feature type="transmembrane region" description="Helical" evidence="2">
    <location>
        <begin position="323"/>
        <end position="343"/>
    </location>
</feature>
<feature type="transmembrane region" description="Helical" evidence="2">
    <location>
        <begin position="356"/>
        <end position="376"/>
    </location>
</feature>
<evidence type="ECO:0000250" key="1"/>
<evidence type="ECO:0000255" key="2"/>
<evidence type="ECO:0000305" key="3"/>
<proteinExistence type="inferred from homology"/>
<sequence>MVAGRKAFALQAGDALSPDKPAEAQPAQVKTDLAANRQDAVFRYAQNGVQVTKTITLHPRNFKVDVRTEVRNGPAQVNMLFPGLGKADNPRVQAVPVGGQPASVQGSGTLSVQNIQYAALQENPSQIAHALIVRPQQGTKVDVQLTGGPQGLVTATLPATSSLEVYGGKNELIHLYQSGYTELPGLFQPNFFGQISLLIVKLMEALYKVIGNWGLVIMALTILLRLVMWPLMQAQGRTTARMQLVQPLQKEIQEKYKGKTDPESQRAMQMEMAQLMRDYQVNPAGCFSTLLPFPVLIALWATIRNFEFDSGFLWLPDLATPDPFYILAVIYLFVNLGQLYVSTRKTPEMFRQQAMIYLVFLYFALTFPSGVTLYIILSTIIGIVQQIIINKQVEHETASLGQTVQKVAPGTRPASKTTVTKTIDAPKK</sequence>
<reference key="1">
    <citation type="journal article" date="1999" name="Science">
        <title>Genome sequence of the radioresistant bacterium Deinococcus radiodurans R1.</title>
        <authorList>
            <person name="White O."/>
            <person name="Eisen J.A."/>
            <person name="Heidelberg J.F."/>
            <person name="Hickey E.K."/>
            <person name="Peterson J.D."/>
            <person name="Dodson R.J."/>
            <person name="Haft D.H."/>
            <person name="Gwinn M.L."/>
            <person name="Nelson W.C."/>
            <person name="Richardson D.L."/>
            <person name="Moffat K.S."/>
            <person name="Qin H."/>
            <person name="Jiang L."/>
            <person name="Pamphile W."/>
            <person name="Crosby M."/>
            <person name="Shen M."/>
            <person name="Vamathevan J.J."/>
            <person name="Lam P."/>
            <person name="McDonald L.A."/>
            <person name="Utterback T.R."/>
            <person name="Zalewski C."/>
            <person name="Makarova K.S."/>
            <person name="Aravind L."/>
            <person name="Daly M.J."/>
            <person name="Minton K.W."/>
            <person name="Fleischmann R.D."/>
            <person name="Ketchum K.A."/>
            <person name="Nelson K.E."/>
            <person name="Salzberg S.L."/>
            <person name="Smith H.O."/>
            <person name="Venter J.C."/>
            <person name="Fraser C.M."/>
        </authorList>
    </citation>
    <scope>NUCLEOTIDE SEQUENCE [LARGE SCALE GENOMIC DNA]</scope>
    <source>
        <strain>ATCC 13939 / DSM 20539 / JCM 16871 / CCUG 27074 / LMG 4051 / NBRC 15346 / NCIMB 9279 / VKM B-1422 / R1</strain>
    </source>
</reference>
<gene>
    <name type="primary">yidC</name>
    <name type="ordered locus">DR_2149</name>
</gene>
<comment type="function">
    <text evidence="1">Required for the insertion and/or proper folding and/or complex formation of integral membrane proteins into the membrane. Involved in integration of membrane proteins that insert both dependently and independently of the Sec translocase complex, as well as at least some lipoproteins. Aids folding of multispanning membrane proteins (By similarity).</text>
</comment>
<comment type="subunit">
    <text evidence="1">Interacts with the Sec translocase complex via SecD. Specifically interacts with transmembrane segments of nascent integral membrane proteins during membrane integration (By similarity).</text>
</comment>
<comment type="subcellular location">
    <subcellularLocation>
        <location evidence="1">Cell membrane</location>
        <topology evidence="1">Multi-pass membrane protein</topology>
    </subcellularLocation>
</comment>
<comment type="similarity">
    <text evidence="3">Belongs to the OXA1/ALB3/YidC family. Type 1 subfamily.</text>
</comment>
<accession>Q9RSH5</accession>
<protein>
    <recommendedName>
        <fullName>Membrane protein insertase YidC</fullName>
    </recommendedName>
    <alternativeName>
        <fullName>Foldase YidC</fullName>
    </alternativeName>
    <alternativeName>
        <fullName>Membrane integrase YidC</fullName>
    </alternativeName>
    <alternativeName>
        <fullName>Membrane protein YidC</fullName>
    </alternativeName>
</protein>